<evidence type="ECO:0000255" key="1">
    <source>
        <dbReference type="HAMAP-Rule" id="MF_00412"/>
    </source>
</evidence>
<keyword id="KW-0028">Amino-acid biosynthesis</keyword>
<keyword id="KW-0963">Cytoplasm</keyword>
<keyword id="KW-0521">NADP</keyword>
<keyword id="KW-0560">Oxidoreductase</keyword>
<keyword id="KW-0641">Proline biosynthesis</keyword>
<sequence length="438" mass="47820">MSTNFSVPEPTPQLVKVAESAKEASISLGQSTNKQRCEALTEMANALNDNADEILKANVQDLERSEKEGLNKSLLSRLQLTKTKLKGCIDGVLKVSNLADPIGKRQLHRELDENLILERVTVPLGVLGVIFESRPDALIQIASLAVRSGNGALLKGGSEAKDTNQSIMDSLDKGLRKSNVGSGALSLLTTRQESLGLLRLDKFVNLIIPRGSNELVQFIQENTRIPVLGHADGICHLYVDNSVDIDKAISIALDSKIQYPAACNAIETLLIHEDVAEMFLKKGLPIFSSEGVTLKGDTKSQALGVKNKADESDWSKEYLDLILSIKIVRNVNEAIEHIRKYSSRHTEAIVTEDKMVAEKFLSSVDSAGVYHNCSTRFADGFRYGFGAEVGISTQTLPPRGPVGLEGLVTYRYYLRGDGDLVKDFASGDRSFSHIDLPL</sequence>
<accession>A2C148</accession>
<dbReference type="EC" id="1.2.1.41" evidence="1"/>
<dbReference type="EMBL" id="CP000553">
    <property type="protein sequence ID" value="ABM75208.1"/>
    <property type="molecule type" value="Genomic_DNA"/>
</dbReference>
<dbReference type="RefSeq" id="WP_011823371.1">
    <property type="nucleotide sequence ID" value="NC_008819.1"/>
</dbReference>
<dbReference type="SMR" id="A2C148"/>
<dbReference type="KEGG" id="pme:NATL1_06461"/>
<dbReference type="eggNOG" id="COG0014">
    <property type="taxonomic scope" value="Bacteria"/>
</dbReference>
<dbReference type="HOGENOM" id="CLU_030231_0_1_3"/>
<dbReference type="UniPathway" id="UPA00098">
    <property type="reaction ID" value="UER00360"/>
</dbReference>
<dbReference type="Proteomes" id="UP000002592">
    <property type="component" value="Chromosome"/>
</dbReference>
<dbReference type="GO" id="GO:0005737">
    <property type="term" value="C:cytoplasm"/>
    <property type="evidence" value="ECO:0007669"/>
    <property type="project" value="UniProtKB-SubCell"/>
</dbReference>
<dbReference type="GO" id="GO:0004350">
    <property type="term" value="F:glutamate-5-semialdehyde dehydrogenase activity"/>
    <property type="evidence" value="ECO:0007669"/>
    <property type="project" value="UniProtKB-UniRule"/>
</dbReference>
<dbReference type="GO" id="GO:0050661">
    <property type="term" value="F:NADP binding"/>
    <property type="evidence" value="ECO:0007669"/>
    <property type="project" value="InterPro"/>
</dbReference>
<dbReference type="GO" id="GO:0055129">
    <property type="term" value="P:L-proline biosynthetic process"/>
    <property type="evidence" value="ECO:0007669"/>
    <property type="project" value="UniProtKB-UniRule"/>
</dbReference>
<dbReference type="CDD" id="cd07079">
    <property type="entry name" value="ALDH_F18-19_ProA-GPR"/>
    <property type="match status" value="1"/>
</dbReference>
<dbReference type="FunFam" id="3.40.309.10:FF:000006">
    <property type="entry name" value="Gamma-glutamyl phosphate reductase"/>
    <property type="match status" value="1"/>
</dbReference>
<dbReference type="Gene3D" id="3.40.605.10">
    <property type="entry name" value="Aldehyde Dehydrogenase, Chain A, domain 1"/>
    <property type="match status" value="1"/>
</dbReference>
<dbReference type="Gene3D" id="3.40.309.10">
    <property type="entry name" value="Aldehyde Dehydrogenase, Chain A, domain 2"/>
    <property type="match status" value="1"/>
</dbReference>
<dbReference type="HAMAP" id="MF_00412">
    <property type="entry name" value="ProA"/>
    <property type="match status" value="1"/>
</dbReference>
<dbReference type="InterPro" id="IPR016161">
    <property type="entry name" value="Ald_DH/histidinol_DH"/>
</dbReference>
<dbReference type="InterPro" id="IPR016163">
    <property type="entry name" value="Ald_DH_C"/>
</dbReference>
<dbReference type="InterPro" id="IPR016162">
    <property type="entry name" value="Ald_DH_N"/>
</dbReference>
<dbReference type="InterPro" id="IPR015590">
    <property type="entry name" value="Aldehyde_DH_dom"/>
</dbReference>
<dbReference type="InterPro" id="IPR020593">
    <property type="entry name" value="G-glutamylP_reductase_CS"/>
</dbReference>
<dbReference type="InterPro" id="IPR012134">
    <property type="entry name" value="Glu-5-SA_DH"/>
</dbReference>
<dbReference type="InterPro" id="IPR000965">
    <property type="entry name" value="GPR_dom"/>
</dbReference>
<dbReference type="NCBIfam" id="NF001221">
    <property type="entry name" value="PRK00197.1"/>
    <property type="match status" value="1"/>
</dbReference>
<dbReference type="NCBIfam" id="TIGR00407">
    <property type="entry name" value="proA"/>
    <property type="match status" value="1"/>
</dbReference>
<dbReference type="PANTHER" id="PTHR11063:SF8">
    <property type="entry name" value="DELTA-1-PYRROLINE-5-CARBOXYLATE SYNTHASE"/>
    <property type="match status" value="1"/>
</dbReference>
<dbReference type="PANTHER" id="PTHR11063">
    <property type="entry name" value="GLUTAMATE SEMIALDEHYDE DEHYDROGENASE"/>
    <property type="match status" value="1"/>
</dbReference>
<dbReference type="Pfam" id="PF00171">
    <property type="entry name" value="Aldedh"/>
    <property type="match status" value="1"/>
</dbReference>
<dbReference type="PIRSF" id="PIRSF000151">
    <property type="entry name" value="GPR"/>
    <property type="match status" value="1"/>
</dbReference>
<dbReference type="SUPFAM" id="SSF53720">
    <property type="entry name" value="ALDH-like"/>
    <property type="match status" value="1"/>
</dbReference>
<dbReference type="PROSITE" id="PS01223">
    <property type="entry name" value="PROA"/>
    <property type="match status" value="1"/>
</dbReference>
<protein>
    <recommendedName>
        <fullName evidence="1">Gamma-glutamyl phosphate reductase</fullName>
        <shortName evidence="1">GPR</shortName>
        <ecNumber evidence="1">1.2.1.41</ecNumber>
    </recommendedName>
    <alternativeName>
        <fullName evidence="1">Glutamate-5-semialdehyde dehydrogenase</fullName>
    </alternativeName>
    <alternativeName>
        <fullName evidence="1">Glutamyl-gamma-semialdehyde dehydrogenase</fullName>
        <shortName evidence="1">GSA dehydrogenase</shortName>
    </alternativeName>
</protein>
<proteinExistence type="inferred from homology"/>
<name>PROA_PROM1</name>
<feature type="chain" id="PRO_1000049977" description="Gamma-glutamyl phosphate reductase">
    <location>
        <begin position="1"/>
        <end position="438"/>
    </location>
</feature>
<organism>
    <name type="scientific">Prochlorococcus marinus (strain NATL1A)</name>
    <dbReference type="NCBI Taxonomy" id="167555"/>
    <lineage>
        <taxon>Bacteria</taxon>
        <taxon>Bacillati</taxon>
        <taxon>Cyanobacteriota</taxon>
        <taxon>Cyanophyceae</taxon>
        <taxon>Synechococcales</taxon>
        <taxon>Prochlorococcaceae</taxon>
        <taxon>Prochlorococcus</taxon>
    </lineage>
</organism>
<gene>
    <name evidence="1" type="primary">proA</name>
    <name type="ordered locus">NATL1_06461</name>
</gene>
<reference key="1">
    <citation type="journal article" date="2007" name="PLoS Genet.">
        <title>Patterns and implications of gene gain and loss in the evolution of Prochlorococcus.</title>
        <authorList>
            <person name="Kettler G.C."/>
            <person name="Martiny A.C."/>
            <person name="Huang K."/>
            <person name="Zucker J."/>
            <person name="Coleman M.L."/>
            <person name="Rodrigue S."/>
            <person name="Chen F."/>
            <person name="Lapidus A."/>
            <person name="Ferriera S."/>
            <person name="Johnson J."/>
            <person name="Steglich C."/>
            <person name="Church G.M."/>
            <person name="Richardson P."/>
            <person name="Chisholm S.W."/>
        </authorList>
    </citation>
    <scope>NUCLEOTIDE SEQUENCE [LARGE SCALE GENOMIC DNA]</scope>
    <source>
        <strain>NATL1A</strain>
    </source>
</reference>
<comment type="function">
    <text evidence="1">Catalyzes the NADPH-dependent reduction of L-glutamate 5-phosphate into L-glutamate 5-semialdehyde and phosphate. The product spontaneously undergoes cyclization to form 1-pyrroline-5-carboxylate.</text>
</comment>
<comment type="catalytic activity">
    <reaction evidence="1">
        <text>L-glutamate 5-semialdehyde + phosphate + NADP(+) = L-glutamyl 5-phosphate + NADPH + H(+)</text>
        <dbReference type="Rhea" id="RHEA:19541"/>
        <dbReference type="ChEBI" id="CHEBI:15378"/>
        <dbReference type="ChEBI" id="CHEBI:43474"/>
        <dbReference type="ChEBI" id="CHEBI:57783"/>
        <dbReference type="ChEBI" id="CHEBI:58066"/>
        <dbReference type="ChEBI" id="CHEBI:58274"/>
        <dbReference type="ChEBI" id="CHEBI:58349"/>
        <dbReference type="EC" id="1.2.1.41"/>
    </reaction>
</comment>
<comment type="pathway">
    <text evidence="1">Amino-acid biosynthesis; L-proline biosynthesis; L-glutamate 5-semialdehyde from L-glutamate: step 2/2.</text>
</comment>
<comment type="subcellular location">
    <subcellularLocation>
        <location evidence="1">Cytoplasm</location>
    </subcellularLocation>
</comment>
<comment type="similarity">
    <text evidence="1">Belongs to the gamma-glutamyl phosphate reductase family.</text>
</comment>